<keyword id="KW-0028">Amino-acid biosynthesis</keyword>
<keyword id="KW-0067">ATP-binding</keyword>
<keyword id="KW-0963">Cytoplasm</keyword>
<keyword id="KW-0328">Glycosyltransferase</keyword>
<keyword id="KW-0368">Histidine biosynthesis</keyword>
<keyword id="KW-0547">Nucleotide-binding</keyword>
<keyword id="KW-1185">Reference proteome</keyword>
<keyword id="KW-0808">Transferase</keyword>
<reference key="1">
    <citation type="journal article" date="2006" name="J. Bacteriol.">
        <title>Comparison of the genome sequence of the poultry pathogen Bordetella avium with those of B. bronchiseptica, B. pertussis, and B. parapertussis reveals extensive diversity in surface structures associated with host interaction.</title>
        <authorList>
            <person name="Sebaihia M."/>
            <person name="Preston A."/>
            <person name="Maskell D.J."/>
            <person name="Kuzmiak H."/>
            <person name="Connell T.D."/>
            <person name="King N.D."/>
            <person name="Orndorff P.E."/>
            <person name="Miyamoto D.M."/>
            <person name="Thomson N.R."/>
            <person name="Harris D."/>
            <person name="Goble A."/>
            <person name="Lord A."/>
            <person name="Murphy L."/>
            <person name="Quail M.A."/>
            <person name="Rutter S."/>
            <person name="Squares R."/>
            <person name="Squares S."/>
            <person name="Woodward J."/>
            <person name="Parkhill J."/>
            <person name="Temple L.M."/>
        </authorList>
    </citation>
    <scope>NUCLEOTIDE SEQUENCE [LARGE SCALE GENOMIC DNA]</scope>
    <source>
        <strain>197N</strain>
    </source>
</reference>
<protein>
    <recommendedName>
        <fullName evidence="1">ATP phosphoribosyltransferase</fullName>
        <shortName evidence="1">ATP-PRT</shortName>
        <shortName evidence="1">ATP-PRTase</shortName>
        <ecNumber evidence="1">2.4.2.17</ecNumber>
    </recommendedName>
</protein>
<feature type="chain" id="PRO_1000063265" description="ATP phosphoribosyltransferase">
    <location>
        <begin position="1"/>
        <end position="227"/>
    </location>
</feature>
<name>HIS1_BORA1</name>
<gene>
    <name evidence="1" type="primary">hisG</name>
    <name type="ordered locus">BAV3313</name>
</gene>
<dbReference type="EC" id="2.4.2.17" evidence="1"/>
<dbReference type="EMBL" id="AM167904">
    <property type="protein sequence ID" value="CAJ50923.1"/>
    <property type="molecule type" value="Genomic_DNA"/>
</dbReference>
<dbReference type="RefSeq" id="WP_012418950.1">
    <property type="nucleotide sequence ID" value="NC_010645.1"/>
</dbReference>
<dbReference type="SMR" id="Q2KTT7"/>
<dbReference type="STRING" id="360910.BAV3313"/>
<dbReference type="GeneID" id="92933428"/>
<dbReference type="KEGG" id="bav:BAV3313"/>
<dbReference type="eggNOG" id="COG0040">
    <property type="taxonomic scope" value="Bacteria"/>
</dbReference>
<dbReference type="HOGENOM" id="CLU_038115_2_0_4"/>
<dbReference type="OrthoDB" id="9801867at2"/>
<dbReference type="UniPathway" id="UPA00031">
    <property type="reaction ID" value="UER00006"/>
</dbReference>
<dbReference type="Proteomes" id="UP000001977">
    <property type="component" value="Chromosome"/>
</dbReference>
<dbReference type="GO" id="GO:0005737">
    <property type="term" value="C:cytoplasm"/>
    <property type="evidence" value="ECO:0007669"/>
    <property type="project" value="UniProtKB-SubCell"/>
</dbReference>
<dbReference type="GO" id="GO:0005524">
    <property type="term" value="F:ATP binding"/>
    <property type="evidence" value="ECO:0007669"/>
    <property type="project" value="UniProtKB-KW"/>
</dbReference>
<dbReference type="GO" id="GO:0003879">
    <property type="term" value="F:ATP phosphoribosyltransferase activity"/>
    <property type="evidence" value="ECO:0007669"/>
    <property type="project" value="UniProtKB-UniRule"/>
</dbReference>
<dbReference type="GO" id="GO:0000105">
    <property type="term" value="P:L-histidine biosynthetic process"/>
    <property type="evidence" value="ECO:0007669"/>
    <property type="project" value="UniProtKB-UniRule"/>
</dbReference>
<dbReference type="CDD" id="cd13595">
    <property type="entry name" value="PBP2_HisGs"/>
    <property type="match status" value="1"/>
</dbReference>
<dbReference type="FunFam" id="3.40.190.10:FF:000008">
    <property type="entry name" value="ATP phosphoribosyltransferase"/>
    <property type="match status" value="1"/>
</dbReference>
<dbReference type="Gene3D" id="3.40.190.10">
    <property type="entry name" value="Periplasmic binding protein-like II"/>
    <property type="match status" value="2"/>
</dbReference>
<dbReference type="HAMAP" id="MF_01018">
    <property type="entry name" value="HisG_Short"/>
    <property type="match status" value="1"/>
</dbReference>
<dbReference type="InterPro" id="IPR013820">
    <property type="entry name" value="ATP_PRibTrfase_cat"/>
</dbReference>
<dbReference type="InterPro" id="IPR018198">
    <property type="entry name" value="ATP_PRibTrfase_CS"/>
</dbReference>
<dbReference type="InterPro" id="IPR001348">
    <property type="entry name" value="ATP_PRibTrfase_HisG"/>
</dbReference>
<dbReference type="InterPro" id="IPR024893">
    <property type="entry name" value="ATP_PRibTrfase_HisG_short"/>
</dbReference>
<dbReference type="NCBIfam" id="TIGR00070">
    <property type="entry name" value="hisG"/>
    <property type="match status" value="1"/>
</dbReference>
<dbReference type="PANTHER" id="PTHR21403:SF8">
    <property type="entry name" value="ATP PHOSPHORIBOSYLTRANSFERASE"/>
    <property type="match status" value="1"/>
</dbReference>
<dbReference type="PANTHER" id="PTHR21403">
    <property type="entry name" value="ATP PHOSPHORIBOSYLTRANSFERASE ATP-PRTASE"/>
    <property type="match status" value="1"/>
</dbReference>
<dbReference type="Pfam" id="PF01634">
    <property type="entry name" value="HisG"/>
    <property type="match status" value="1"/>
</dbReference>
<dbReference type="SUPFAM" id="SSF53850">
    <property type="entry name" value="Periplasmic binding protein-like II"/>
    <property type="match status" value="1"/>
</dbReference>
<dbReference type="PROSITE" id="PS01316">
    <property type="entry name" value="ATP_P_PHORIBOSYLTR"/>
    <property type="match status" value="1"/>
</dbReference>
<proteinExistence type="inferred from homology"/>
<evidence type="ECO:0000255" key="1">
    <source>
        <dbReference type="HAMAP-Rule" id="MF_01018"/>
    </source>
</evidence>
<organism>
    <name type="scientific">Bordetella avium (strain 197N)</name>
    <dbReference type="NCBI Taxonomy" id="360910"/>
    <lineage>
        <taxon>Bacteria</taxon>
        <taxon>Pseudomonadati</taxon>
        <taxon>Pseudomonadota</taxon>
        <taxon>Betaproteobacteria</taxon>
        <taxon>Burkholderiales</taxon>
        <taxon>Alcaligenaceae</taxon>
        <taxon>Bordetella</taxon>
    </lineage>
</organism>
<comment type="function">
    <text evidence="1">Catalyzes the condensation of ATP and 5-phosphoribose 1-diphosphate to form N'-(5'-phosphoribosyl)-ATP (PR-ATP). Has a crucial role in the pathway because the rate of histidine biosynthesis seems to be controlled primarily by regulation of HisG enzymatic activity.</text>
</comment>
<comment type="catalytic activity">
    <reaction evidence="1">
        <text>1-(5-phospho-beta-D-ribosyl)-ATP + diphosphate = 5-phospho-alpha-D-ribose 1-diphosphate + ATP</text>
        <dbReference type="Rhea" id="RHEA:18473"/>
        <dbReference type="ChEBI" id="CHEBI:30616"/>
        <dbReference type="ChEBI" id="CHEBI:33019"/>
        <dbReference type="ChEBI" id="CHEBI:58017"/>
        <dbReference type="ChEBI" id="CHEBI:73183"/>
        <dbReference type="EC" id="2.4.2.17"/>
    </reaction>
</comment>
<comment type="pathway">
    <text evidence="1">Amino-acid biosynthesis; L-histidine biosynthesis; L-histidine from 5-phospho-alpha-D-ribose 1-diphosphate: step 1/9.</text>
</comment>
<comment type="subunit">
    <text evidence="1">Heteromultimer composed of HisG and HisZ subunits.</text>
</comment>
<comment type="subcellular location">
    <subcellularLocation>
        <location evidence="1">Cytoplasm</location>
    </subcellularLocation>
</comment>
<comment type="domain">
    <text>Lacks the C-terminal regulatory region which is replaced by HisZ.</text>
</comment>
<comment type="similarity">
    <text evidence="1">Belongs to the ATP phosphoribosyltransferase family. Short subfamily.</text>
</comment>
<accession>Q2KTT7</accession>
<sequence>MSIAAAPLTLALSKGRIFEETLPLLAEAGIGVVESPESSRKLILPTSDPGLRLIIVRASDVPTYVQYGAADFGIAGKDVLIEHAAGQAGRLYQPIDLNIAKCRLSVAVREDFDYAAAVHQGARLRVATKYVQSAREHFASKGVYVDLIKLYGSMELAPLVGLADAIVDLVSTGGTLRANGLREVETIMPISSRLIVNQASLKTRGASLQPLLDAFQRASQGQADSNS</sequence>